<evidence type="ECO:0000255" key="1">
    <source>
        <dbReference type="HAMAP-Rule" id="MF_00073"/>
    </source>
</evidence>
<protein>
    <recommendedName>
        <fullName evidence="1">Transcription antitermination protein NusB</fullName>
    </recommendedName>
    <alternativeName>
        <fullName evidence="1">Antitermination factor NusB</fullName>
    </alternativeName>
</protein>
<comment type="function">
    <text evidence="1">Involved in transcription antitermination. Required for transcription of ribosomal RNA (rRNA) genes. Binds specifically to the boxA antiterminator sequence of the ribosomal RNA (rrn) operons.</text>
</comment>
<comment type="similarity">
    <text evidence="1">Belongs to the NusB family.</text>
</comment>
<organism>
    <name type="scientific">Helicobacter pylori (strain P12)</name>
    <dbReference type="NCBI Taxonomy" id="570508"/>
    <lineage>
        <taxon>Bacteria</taxon>
        <taxon>Pseudomonadati</taxon>
        <taxon>Campylobacterota</taxon>
        <taxon>Epsilonproteobacteria</taxon>
        <taxon>Campylobacterales</taxon>
        <taxon>Helicobacteraceae</taxon>
        <taxon>Helicobacter</taxon>
    </lineage>
</organism>
<keyword id="KW-0694">RNA-binding</keyword>
<keyword id="KW-0804">Transcription</keyword>
<keyword id="KW-0889">Transcription antitermination</keyword>
<keyword id="KW-0805">Transcription regulation</keyword>
<name>NUSB_HELP2</name>
<sequence>MATRTQARGAVVELLYAFESGNEEIKKIASSMLEEKKIKNNQLAFALSLFNGVLERINEIDALIEPHLKDWDFKRLGSMEKAILRLGAYEIGFTPTQNPIIINECIELGKLYAEPNTPKFLNAILDSLSKKLTQKPLN</sequence>
<feature type="chain" id="PRO_1000092557" description="Transcription antitermination protein NusB">
    <location>
        <begin position="1"/>
        <end position="138"/>
    </location>
</feature>
<dbReference type="EMBL" id="CP001217">
    <property type="protein sequence ID" value="ACJ07161.1"/>
    <property type="molecule type" value="Genomic_DNA"/>
</dbReference>
<dbReference type="SMR" id="B6JPA0"/>
<dbReference type="KEGG" id="hpp:HPP12_0001"/>
<dbReference type="HOGENOM" id="CLU_087843_3_3_7"/>
<dbReference type="Proteomes" id="UP000008198">
    <property type="component" value="Chromosome"/>
</dbReference>
<dbReference type="GO" id="GO:0005829">
    <property type="term" value="C:cytosol"/>
    <property type="evidence" value="ECO:0007669"/>
    <property type="project" value="TreeGrafter"/>
</dbReference>
<dbReference type="GO" id="GO:0003723">
    <property type="term" value="F:RNA binding"/>
    <property type="evidence" value="ECO:0007669"/>
    <property type="project" value="UniProtKB-UniRule"/>
</dbReference>
<dbReference type="GO" id="GO:0006353">
    <property type="term" value="P:DNA-templated transcription termination"/>
    <property type="evidence" value="ECO:0007669"/>
    <property type="project" value="UniProtKB-UniRule"/>
</dbReference>
<dbReference type="GO" id="GO:0031564">
    <property type="term" value="P:transcription antitermination"/>
    <property type="evidence" value="ECO:0007669"/>
    <property type="project" value="UniProtKB-KW"/>
</dbReference>
<dbReference type="CDD" id="cd00619">
    <property type="entry name" value="Terminator_NusB"/>
    <property type="match status" value="1"/>
</dbReference>
<dbReference type="FunFam" id="1.10.940.10:FF:000004">
    <property type="entry name" value="Transcription antitermination protein NusB"/>
    <property type="match status" value="1"/>
</dbReference>
<dbReference type="Gene3D" id="1.10.940.10">
    <property type="entry name" value="NusB-like"/>
    <property type="match status" value="1"/>
</dbReference>
<dbReference type="HAMAP" id="MF_00073">
    <property type="entry name" value="NusB"/>
    <property type="match status" value="1"/>
</dbReference>
<dbReference type="InterPro" id="IPR035926">
    <property type="entry name" value="NusB-like_sf"/>
</dbReference>
<dbReference type="InterPro" id="IPR011605">
    <property type="entry name" value="NusB_fam"/>
</dbReference>
<dbReference type="InterPro" id="IPR006027">
    <property type="entry name" value="NusB_RsmB_TIM44"/>
</dbReference>
<dbReference type="NCBIfam" id="TIGR01951">
    <property type="entry name" value="nusB"/>
    <property type="match status" value="1"/>
</dbReference>
<dbReference type="PANTHER" id="PTHR11078:SF3">
    <property type="entry name" value="ANTITERMINATION NUSB DOMAIN-CONTAINING PROTEIN"/>
    <property type="match status" value="1"/>
</dbReference>
<dbReference type="PANTHER" id="PTHR11078">
    <property type="entry name" value="N UTILIZATION SUBSTANCE PROTEIN B-RELATED"/>
    <property type="match status" value="1"/>
</dbReference>
<dbReference type="Pfam" id="PF01029">
    <property type="entry name" value="NusB"/>
    <property type="match status" value="1"/>
</dbReference>
<dbReference type="SUPFAM" id="SSF48013">
    <property type="entry name" value="NusB-like"/>
    <property type="match status" value="1"/>
</dbReference>
<proteinExistence type="inferred from homology"/>
<reference key="1">
    <citation type="submission" date="2008-10" db="EMBL/GenBank/DDBJ databases">
        <title>The complete genome sequence of Helicobacter pylori strain P12.</title>
        <authorList>
            <person name="Fischer W."/>
            <person name="Windhager L."/>
            <person name="Karnholz A."/>
            <person name="Zeiller M."/>
            <person name="Zimmer R."/>
            <person name="Haas R."/>
        </authorList>
    </citation>
    <scope>NUCLEOTIDE SEQUENCE [LARGE SCALE GENOMIC DNA]</scope>
    <source>
        <strain>P12</strain>
    </source>
</reference>
<gene>
    <name evidence="1" type="primary">nusB</name>
    <name type="ordered locus">HPP12_0001</name>
</gene>
<accession>B6JPA0</accession>